<evidence type="ECO:0000255" key="1">
    <source>
        <dbReference type="HAMAP-Rule" id="MF_00015"/>
    </source>
</evidence>
<name>LEXA_CLOBH</name>
<organism>
    <name type="scientific">Clostridium botulinum (strain Hall / ATCC 3502 / NCTC 13319 / Type A)</name>
    <dbReference type="NCBI Taxonomy" id="441771"/>
    <lineage>
        <taxon>Bacteria</taxon>
        <taxon>Bacillati</taxon>
        <taxon>Bacillota</taxon>
        <taxon>Clostridia</taxon>
        <taxon>Eubacteriales</taxon>
        <taxon>Clostridiaceae</taxon>
        <taxon>Clostridium</taxon>
    </lineage>
</organism>
<gene>
    <name evidence="1" type="primary">lexA</name>
    <name type="ordered locus">CBO1795</name>
    <name type="ordered locus">CLC_1737</name>
</gene>
<proteinExistence type="inferred from homology"/>
<sequence>MNKSRIDKQNEVYNFIKLQIKEKGYPPSVREICKAVGLSSTSSVHFHLKRLEKEGLIKRDSSKTRAIEIVDPTSKKEVINVPIVGTITAGNPILAIENIEDVFPLPIDYVKNTKDLFMLKVSGESMIEAGILNGDLAIIEKTDSANNGDIVVALIDNEATLKRFFKESSYIRLQPENKSMKPIILENCKVLGRLVGIYRKY</sequence>
<protein>
    <recommendedName>
        <fullName evidence="1">LexA repressor</fullName>
        <ecNumber evidence="1">3.4.21.88</ecNumber>
    </recommendedName>
</protein>
<comment type="function">
    <text evidence="1">Represses a number of genes involved in the response to DNA damage (SOS response), including recA and lexA. In the presence of single-stranded DNA, RecA interacts with LexA causing an autocatalytic cleavage which disrupts the DNA-binding part of LexA, leading to derepression of the SOS regulon and eventually DNA repair.</text>
</comment>
<comment type="catalytic activity">
    <reaction evidence="1">
        <text>Hydrolysis of Ala-|-Gly bond in repressor LexA.</text>
        <dbReference type="EC" id="3.4.21.88"/>
    </reaction>
</comment>
<comment type="subunit">
    <text evidence="1">Homodimer.</text>
</comment>
<comment type="similarity">
    <text evidence="1">Belongs to the peptidase S24 family.</text>
</comment>
<reference key="1">
    <citation type="journal article" date="2007" name="Genome Res.">
        <title>Genome sequence of a proteolytic (Group I) Clostridium botulinum strain Hall A and comparative analysis of the clostridial genomes.</title>
        <authorList>
            <person name="Sebaihia M."/>
            <person name="Peck M.W."/>
            <person name="Minton N.P."/>
            <person name="Thomson N.R."/>
            <person name="Holden M.T.G."/>
            <person name="Mitchell W.J."/>
            <person name="Carter A.T."/>
            <person name="Bentley S.D."/>
            <person name="Mason D.R."/>
            <person name="Crossman L."/>
            <person name="Paul C.J."/>
            <person name="Ivens A."/>
            <person name="Wells-Bennik M.H.J."/>
            <person name="Davis I.J."/>
            <person name="Cerdeno-Tarraga A.M."/>
            <person name="Churcher C."/>
            <person name="Quail M.A."/>
            <person name="Chillingworth T."/>
            <person name="Feltwell T."/>
            <person name="Fraser A."/>
            <person name="Goodhead I."/>
            <person name="Hance Z."/>
            <person name="Jagels K."/>
            <person name="Larke N."/>
            <person name="Maddison M."/>
            <person name="Moule S."/>
            <person name="Mungall K."/>
            <person name="Norbertczak H."/>
            <person name="Rabbinowitsch E."/>
            <person name="Sanders M."/>
            <person name="Simmonds M."/>
            <person name="White B."/>
            <person name="Whithead S."/>
            <person name="Parkhill J."/>
        </authorList>
    </citation>
    <scope>NUCLEOTIDE SEQUENCE [LARGE SCALE GENOMIC DNA]</scope>
    <source>
        <strain>Hall / ATCC 3502 / NCTC 13319 / Type A</strain>
    </source>
</reference>
<reference key="2">
    <citation type="journal article" date="2007" name="PLoS ONE">
        <title>Analysis of the neurotoxin complex genes in Clostridium botulinum A1-A4 and B1 strains: BoNT/A3, /Ba4 and /B1 clusters are located within plasmids.</title>
        <authorList>
            <person name="Smith T.J."/>
            <person name="Hill K.K."/>
            <person name="Foley B.T."/>
            <person name="Detter J.C."/>
            <person name="Munk A.C."/>
            <person name="Bruce D.C."/>
            <person name="Doggett N.A."/>
            <person name="Smith L.A."/>
            <person name="Marks J.D."/>
            <person name="Xie G."/>
            <person name="Brettin T.S."/>
        </authorList>
    </citation>
    <scope>NUCLEOTIDE SEQUENCE [LARGE SCALE GENOMIC DNA]</scope>
    <source>
        <strain>Hall / ATCC 3502 / NCTC 13319 / Type A</strain>
    </source>
</reference>
<accession>A5I2R7</accession>
<accession>A7G478</accession>
<dbReference type="EC" id="3.4.21.88" evidence="1"/>
<dbReference type="EMBL" id="CP000727">
    <property type="protein sequence ID" value="ABS37659.1"/>
    <property type="molecule type" value="Genomic_DNA"/>
</dbReference>
<dbReference type="EMBL" id="AM412317">
    <property type="protein sequence ID" value="CAL83334.1"/>
    <property type="molecule type" value="Genomic_DNA"/>
</dbReference>
<dbReference type="RefSeq" id="WP_011986377.1">
    <property type="nucleotide sequence ID" value="NC_009698.1"/>
</dbReference>
<dbReference type="RefSeq" id="YP_001254295.1">
    <property type="nucleotide sequence ID" value="NC_009495.1"/>
</dbReference>
<dbReference type="RefSeq" id="YP_001387593.1">
    <property type="nucleotide sequence ID" value="NC_009698.1"/>
</dbReference>
<dbReference type="SMR" id="A5I2R7"/>
<dbReference type="MEROPS" id="S24.001"/>
<dbReference type="GeneID" id="5186050"/>
<dbReference type="KEGG" id="cbh:CLC_1737"/>
<dbReference type="KEGG" id="cbo:CBO1795"/>
<dbReference type="PATRIC" id="fig|413999.7.peg.1765"/>
<dbReference type="HOGENOM" id="CLU_066192_45_1_9"/>
<dbReference type="PRO" id="PR:A5I2R7"/>
<dbReference type="Proteomes" id="UP000001986">
    <property type="component" value="Chromosome"/>
</dbReference>
<dbReference type="GO" id="GO:0032993">
    <property type="term" value="C:protein-DNA complex"/>
    <property type="evidence" value="ECO:0000318"/>
    <property type="project" value="GO_Central"/>
</dbReference>
<dbReference type="GO" id="GO:0001217">
    <property type="term" value="F:DNA-binding transcription repressor activity"/>
    <property type="evidence" value="ECO:0000318"/>
    <property type="project" value="GO_Central"/>
</dbReference>
<dbReference type="GO" id="GO:0043565">
    <property type="term" value="F:sequence-specific DNA binding"/>
    <property type="evidence" value="ECO:0000318"/>
    <property type="project" value="GO_Central"/>
</dbReference>
<dbReference type="GO" id="GO:0004252">
    <property type="term" value="F:serine-type endopeptidase activity"/>
    <property type="evidence" value="ECO:0007669"/>
    <property type="project" value="UniProtKB-UniRule"/>
</dbReference>
<dbReference type="GO" id="GO:0006281">
    <property type="term" value="P:DNA repair"/>
    <property type="evidence" value="ECO:0007669"/>
    <property type="project" value="UniProtKB-UniRule"/>
</dbReference>
<dbReference type="GO" id="GO:0006260">
    <property type="term" value="P:DNA replication"/>
    <property type="evidence" value="ECO:0007669"/>
    <property type="project" value="UniProtKB-UniRule"/>
</dbReference>
<dbReference type="GO" id="GO:0045892">
    <property type="term" value="P:negative regulation of DNA-templated transcription"/>
    <property type="evidence" value="ECO:0000318"/>
    <property type="project" value="GO_Central"/>
</dbReference>
<dbReference type="GO" id="GO:0006508">
    <property type="term" value="P:proteolysis"/>
    <property type="evidence" value="ECO:0007669"/>
    <property type="project" value="InterPro"/>
</dbReference>
<dbReference type="GO" id="GO:0009432">
    <property type="term" value="P:SOS response"/>
    <property type="evidence" value="ECO:0000318"/>
    <property type="project" value="GO_Central"/>
</dbReference>
<dbReference type="CDD" id="cd00090">
    <property type="entry name" value="HTH_ARSR"/>
    <property type="match status" value="1"/>
</dbReference>
<dbReference type="CDD" id="cd06529">
    <property type="entry name" value="S24_LexA-like"/>
    <property type="match status" value="1"/>
</dbReference>
<dbReference type="FunFam" id="1.10.10.10:FF:000009">
    <property type="entry name" value="LexA repressor"/>
    <property type="match status" value="1"/>
</dbReference>
<dbReference type="FunFam" id="2.10.109.10:FF:000001">
    <property type="entry name" value="LexA repressor"/>
    <property type="match status" value="1"/>
</dbReference>
<dbReference type="Gene3D" id="2.10.109.10">
    <property type="entry name" value="Umud Fragment, subunit A"/>
    <property type="match status" value="1"/>
</dbReference>
<dbReference type="Gene3D" id="1.10.10.10">
    <property type="entry name" value="Winged helix-like DNA-binding domain superfamily/Winged helix DNA-binding domain"/>
    <property type="match status" value="1"/>
</dbReference>
<dbReference type="HAMAP" id="MF_00015">
    <property type="entry name" value="LexA"/>
    <property type="match status" value="1"/>
</dbReference>
<dbReference type="InterPro" id="IPR011991">
    <property type="entry name" value="ArsR-like_HTH"/>
</dbReference>
<dbReference type="InterPro" id="IPR006200">
    <property type="entry name" value="LexA"/>
</dbReference>
<dbReference type="InterPro" id="IPR039418">
    <property type="entry name" value="LexA-like"/>
</dbReference>
<dbReference type="InterPro" id="IPR036286">
    <property type="entry name" value="LexA/Signal_pep-like_sf"/>
</dbReference>
<dbReference type="InterPro" id="IPR006199">
    <property type="entry name" value="LexA_DNA-bd_dom"/>
</dbReference>
<dbReference type="InterPro" id="IPR050077">
    <property type="entry name" value="LexA_repressor"/>
</dbReference>
<dbReference type="InterPro" id="IPR006197">
    <property type="entry name" value="Peptidase_S24_LexA"/>
</dbReference>
<dbReference type="InterPro" id="IPR015927">
    <property type="entry name" value="Peptidase_S24_S26A/B/C"/>
</dbReference>
<dbReference type="InterPro" id="IPR036388">
    <property type="entry name" value="WH-like_DNA-bd_sf"/>
</dbReference>
<dbReference type="InterPro" id="IPR036390">
    <property type="entry name" value="WH_DNA-bd_sf"/>
</dbReference>
<dbReference type="NCBIfam" id="TIGR00498">
    <property type="entry name" value="lexA"/>
    <property type="match status" value="1"/>
</dbReference>
<dbReference type="PANTHER" id="PTHR33516">
    <property type="entry name" value="LEXA REPRESSOR"/>
    <property type="match status" value="1"/>
</dbReference>
<dbReference type="PANTHER" id="PTHR33516:SF2">
    <property type="entry name" value="LEXA REPRESSOR-RELATED"/>
    <property type="match status" value="1"/>
</dbReference>
<dbReference type="Pfam" id="PF01726">
    <property type="entry name" value="LexA_DNA_bind"/>
    <property type="match status" value="1"/>
</dbReference>
<dbReference type="Pfam" id="PF00717">
    <property type="entry name" value="Peptidase_S24"/>
    <property type="match status" value="1"/>
</dbReference>
<dbReference type="PRINTS" id="PR00726">
    <property type="entry name" value="LEXASERPTASE"/>
</dbReference>
<dbReference type="SUPFAM" id="SSF51306">
    <property type="entry name" value="LexA/Signal peptidase"/>
    <property type="match status" value="1"/>
</dbReference>
<dbReference type="SUPFAM" id="SSF46785">
    <property type="entry name" value="Winged helix' DNA-binding domain"/>
    <property type="match status" value="1"/>
</dbReference>
<keyword id="KW-0068">Autocatalytic cleavage</keyword>
<keyword id="KW-0227">DNA damage</keyword>
<keyword id="KW-0234">DNA repair</keyword>
<keyword id="KW-0235">DNA replication</keyword>
<keyword id="KW-0238">DNA-binding</keyword>
<keyword id="KW-0378">Hydrolase</keyword>
<keyword id="KW-1185">Reference proteome</keyword>
<keyword id="KW-0678">Repressor</keyword>
<keyword id="KW-0742">SOS response</keyword>
<keyword id="KW-0804">Transcription</keyword>
<keyword id="KW-0805">Transcription regulation</keyword>
<feature type="chain" id="PRO_0000322722" description="LexA repressor">
    <location>
        <begin position="1"/>
        <end position="201"/>
    </location>
</feature>
<feature type="DNA-binding region" description="H-T-H motif" evidence="1">
    <location>
        <begin position="29"/>
        <end position="49"/>
    </location>
</feature>
<feature type="active site" description="For autocatalytic cleavage activity" evidence="1">
    <location>
        <position position="125"/>
    </location>
</feature>
<feature type="active site" description="For autocatalytic cleavage activity" evidence="1">
    <location>
        <position position="162"/>
    </location>
</feature>
<feature type="site" description="Cleavage; by autolysis" evidence="1">
    <location>
        <begin position="89"/>
        <end position="90"/>
    </location>
</feature>